<accession>B5RPI5</accession>
<dbReference type="EMBL" id="CP000993">
    <property type="protein sequence ID" value="ACH94719.1"/>
    <property type="molecule type" value="Genomic_DNA"/>
</dbReference>
<dbReference type="RefSeq" id="WP_012538933.1">
    <property type="nucleotide sequence ID" value="NC_011244.1"/>
</dbReference>
<dbReference type="SMR" id="B5RPI5"/>
<dbReference type="KEGG" id="bre:BRE_487"/>
<dbReference type="HOGENOM" id="CLU_036235_2_1_12"/>
<dbReference type="Proteomes" id="UP000000612">
    <property type="component" value="Chromosome"/>
</dbReference>
<dbReference type="GO" id="GO:0015934">
    <property type="term" value="C:large ribosomal subunit"/>
    <property type="evidence" value="ECO:0007669"/>
    <property type="project" value="InterPro"/>
</dbReference>
<dbReference type="GO" id="GO:0019843">
    <property type="term" value="F:rRNA binding"/>
    <property type="evidence" value="ECO:0007669"/>
    <property type="project" value="UniProtKB-UniRule"/>
</dbReference>
<dbReference type="GO" id="GO:0003735">
    <property type="term" value="F:structural constituent of ribosome"/>
    <property type="evidence" value="ECO:0007669"/>
    <property type="project" value="InterPro"/>
</dbReference>
<dbReference type="GO" id="GO:0016740">
    <property type="term" value="F:transferase activity"/>
    <property type="evidence" value="ECO:0007669"/>
    <property type="project" value="InterPro"/>
</dbReference>
<dbReference type="GO" id="GO:0002181">
    <property type="term" value="P:cytoplasmic translation"/>
    <property type="evidence" value="ECO:0007669"/>
    <property type="project" value="TreeGrafter"/>
</dbReference>
<dbReference type="FunFam" id="2.30.30.30:FF:000001">
    <property type="entry name" value="50S ribosomal protein L2"/>
    <property type="match status" value="1"/>
</dbReference>
<dbReference type="FunFam" id="4.10.950.10:FF:000001">
    <property type="entry name" value="50S ribosomal protein L2"/>
    <property type="match status" value="1"/>
</dbReference>
<dbReference type="Gene3D" id="2.30.30.30">
    <property type="match status" value="1"/>
</dbReference>
<dbReference type="Gene3D" id="2.40.50.140">
    <property type="entry name" value="Nucleic acid-binding proteins"/>
    <property type="match status" value="1"/>
</dbReference>
<dbReference type="Gene3D" id="4.10.950.10">
    <property type="entry name" value="Ribosomal protein L2, domain 3"/>
    <property type="match status" value="1"/>
</dbReference>
<dbReference type="HAMAP" id="MF_01320_B">
    <property type="entry name" value="Ribosomal_uL2_B"/>
    <property type="match status" value="1"/>
</dbReference>
<dbReference type="InterPro" id="IPR012340">
    <property type="entry name" value="NA-bd_OB-fold"/>
</dbReference>
<dbReference type="InterPro" id="IPR014722">
    <property type="entry name" value="Rib_uL2_dom2"/>
</dbReference>
<dbReference type="InterPro" id="IPR002171">
    <property type="entry name" value="Ribosomal_uL2"/>
</dbReference>
<dbReference type="InterPro" id="IPR005880">
    <property type="entry name" value="Ribosomal_uL2_bac/org-type"/>
</dbReference>
<dbReference type="InterPro" id="IPR022669">
    <property type="entry name" value="Ribosomal_uL2_C"/>
</dbReference>
<dbReference type="InterPro" id="IPR022671">
    <property type="entry name" value="Ribosomal_uL2_CS"/>
</dbReference>
<dbReference type="InterPro" id="IPR014726">
    <property type="entry name" value="Ribosomal_uL2_dom3"/>
</dbReference>
<dbReference type="InterPro" id="IPR022666">
    <property type="entry name" value="Ribosomal_uL2_RNA-bd_dom"/>
</dbReference>
<dbReference type="InterPro" id="IPR008991">
    <property type="entry name" value="Translation_prot_SH3-like_sf"/>
</dbReference>
<dbReference type="NCBIfam" id="TIGR01171">
    <property type="entry name" value="rplB_bact"/>
    <property type="match status" value="1"/>
</dbReference>
<dbReference type="PANTHER" id="PTHR13691:SF5">
    <property type="entry name" value="LARGE RIBOSOMAL SUBUNIT PROTEIN UL2M"/>
    <property type="match status" value="1"/>
</dbReference>
<dbReference type="PANTHER" id="PTHR13691">
    <property type="entry name" value="RIBOSOMAL PROTEIN L2"/>
    <property type="match status" value="1"/>
</dbReference>
<dbReference type="Pfam" id="PF00181">
    <property type="entry name" value="Ribosomal_L2"/>
    <property type="match status" value="1"/>
</dbReference>
<dbReference type="Pfam" id="PF03947">
    <property type="entry name" value="Ribosomal_L2_C"/>
    <property type="match status" value="1"/>
</dbReference>
<dbReference type="PIRSF" id="PIRSF002158">
    <property type="entry name" value="Ribosomal_L2"/>
    <property type="match status" value="1"/>
</dbReference>
<dbReference type="SMART" id="SM01383">
    <property type="entry name" value="Ribosomal_L2"/>
    <property type="match status" value="1"/>
</dbReference>
<dbReference type="SMART" id="SM01382">
    <property type="entry name" value="Ribosomal_L2_C"/>
    <property type="match status" value="1"/>
</dbReference>
<dbReference type="SUPFAM" id="SSF50249">
    <property type="entry name" value="Nucleic acid-binding proteins"/>
    <property type="match status" value="1"/>
</dbReference>
<dbReference type="SUPFAM" id="SSF50104">
    <property type="entry name" value="Translation proteins SH3-like domain"/>
    <property type="match status" value="1"/>
</dbReference>
<dbReference type="PROSITE" id="PS00467">
    <property type="entry name" value="RIBOSOMAL_L2"/>
    <property type="match status" value="1"/>
</dbReference>
<keyword id="KW-0687">Ribonucleoprotein</keyword>
<keyword id="KW-0689">Ribosomal protein</keyword>
<keyword id="KW-0694">RNA-binding</keyword>
<keyword id="KW-0699">rRNA-binding</keyword>
<evidence type="ECO:0000255" key="1">
    <source>
        <dbReference type="HAMAP-Rule" id="MF_01320"/>
    </source>
</evidence>
<evidence type="ECO:0000256" key="2">
    <source>
        <dbReference type="SAM" id="MobiDB-lite"/>
    </source>
</evidence>
<evidence type="ECO:0000305" key="3"/>
<protein>
    <recommendedName>
        <fullName evidence="1">Large ribosomal subunit protein uL2</fullName>
    </recommendedName>
    <alternativeName>
        <fullName evidence="3">50S ribosomal protein L2</fullName>
    </alternativeName>
</protein>
<proteinExistence type="inferred from homology"/>
<organism>
    <name type="scientific">Borrelia recurrentis (strain A1)</name>
    <dbReference type="NCBI Taxonomy" id="412418"/>
    <lineage>
        <taxon>Bacteria</taxon>
        <taxon>Pseudomonadati</taxon>
        <taxon>Spirochaetota</taxon>
        <taxon>Spirochaetia</taxon>
        <taxon>Spirochaetales</taxon>
        <taxon>Borreliaceae</taxon>
        <taxon>Borrelia</taxon>
    </lineage>
</organism>
<reference key="1">
    <citation type="journal article" date="2008" name="PLoS Genet.">
        <title>The genome of Borrelia recurrentis, the agent of deadly louse-borne relapsing fever, is a degraded subset of tick-borne Borrelia duttonii.</title>
        <authorList>
            <person name="Lescot M."/>
            <person name="Audic S."/>
            <person name="Robert C."/>
            <person name="Nguyen T.T."/>
            <person name="Blanc G."/>
            <person name="Cutler S.J."/>
            <person name="Wincker P."/>
            <person name="Couloux A."/>
            <person name="Claverie J.-M."/>
            <person name="Raoult D."/>
            <person name="Drancourt M."/>
        </authorList>
    </citation>
    <scope>NUCLEOTIDE SEQUENCE [LARGE SCALE GENOMIC DNA]</scope>
    <source>
        <strain>A1</strain>
    </source>
</reference>
<sequence>MGIKIYRPKTSSLRYKTTLSFDELSKGNDPLKSLTKGKVSRAGRDSSGRISVRRRGGGHKRRYREIDFARRDKFGIPARVAAIEYDPNRSPNIALLVYRDGDKRYIIAPKGVKVGDILESGPNAPIKIGNALPLENIPVGKMVHNIELNIGKGGQLVRGAGGYAMIIASDGDYVTVKLPSGEMRMIFKKCIATLGEVGNEDYMNVSIGKAGKSRWLGRRPKVRGVAMNPIDHPHGGGEGKTSGGRHPVSPWGQPAKGYKTRKKNKYSDKFIVKRRNN</sequence>
<gene>
    <name evidence="1" type="primary">rplB</name>
    <name type="ordered locus">BRE_487</name>
</gene>
<feature type="chain" id="PRO_1000141513" description="Large ribosomal subunit protein uL2">
    <location>
        <begin position="1"/>
        <end position="277"/>
    </location>
</feature>
<feature type="region of interest" description="Disordered" evidence="2">
    <location>
        <begin position="32"/>
        <end position="58"/>
    </location>
</feature>
<feature type="region of interest" description="Disordered" evidence="2">
    <location>
        <begin position="225"/>
        <end position="277"/>
    </location>
</feature>
<name>RL2_BORRA</name>
<comment type="function">
    <text evidence="1">One of the primary rRNA binding proteins. Required for association of the 30S and 50S subunits to form the 70S ribosome, for tRNA binding and peptide bond formation. It has been suggested to have peptidyltransferase activity; this is somewhat controversial. Makes several contacts with the 16S rRNA in the 70S ribosome.</text>
</comment>
<comment type="subunit">
    <text evidence="1">Part of the 50S ribosomal subunit. Forms a bridge to the 30S subunit in the 70S ribosome.</text>
</comment>
<comment type="similarity">
    <text evidence="1">Belongs to the universal ribosomal protein uL2 family.</text>
</comment>